<feature type="signal peptide" evidence="5">
    <location>
        <begin position="1"/>
        <end position="23"/>
    </location>
</feature>
<feature type="chain" id="PRO_0000031877" description="High-affinity zinc uptake system protein ZnuA">
    <location>
        <begin position="24"/>
        <end position="337"/>
    </location>
</feature>
<feature type="region of interest" description="Disordered" evidence="4">
    <location>
        <begin position="119"/>
        <end position="163"/>
    </location>
</feature>
<feature type="compositionally biased region" description="Basic and acidic residues" evidence="4">
    <location>
        <begin position="119"/>
        <end position="129"/>
    </location>
</feature>
<feature type="binding site" evidence="1">
    <location>
        <position position="57"/>
    </location>
    <ligand>
        <name>Zn(2+)</name>
        <dbReference type="ChEBI" id="CHEBI:29105"/>
    </ligand>
</feature>
<feature type="binding site" evidence="1">
    <location>
        <position position="171"/>
    </location>
    <ligand>
        <name>Zn(2+)</name>
        <dbReference type="ChEBI" id="CHEBI:29105"/>
    </ligand>
</feature>
<feature type="binding site" evidence="1">
    <location>
        <position position="235"/>
    </location>
    <ligand>
        <name>Zn(2+)</name>
        <dbReference type="ChEBI" id="CHEBI:29105"/>
    </ligand>
</feature>
<feature type="binding site" evidence="2">
    <location>
        <position position="307"/>
    </location>
    <ligand>
        <name>Zn(2+)</name>
        <dbReference type="ChEBI" id="CHEBI:29105"/>
    </ligand>
</feature>
<feature type="disulfide bond" evidence="1">
    <location>
        <begin position="280"/>
        <end position="334"/>
    </location>
</feature>
<reference key="1">
    <citation type="journal article" date="1995" name="Science">
        <title>Whole-genome random sequencing and assembly of Haemophilus influenzae Rd.</title>
        <authorList>
            <person name="Fleischmann R.D."/>
            <person name="Adams M.D."/>
            <person name="White O."/>
            <person name="Clayton R.A."/>
            <person name="Kirkness E.F."/>
            <person name="Kerlavage A.R."/>
            <person name="Bult C.J."/>
            <person name="Tomb J.-F."/>
            <person name="Dougherty B.A."/>
            <person name="Merrick J.M."/>
            <person name="McKenney K."/>
            <person name="Sutton G.G."/>
            <person name="FitzHugh W."/>
            <person name="Fields C.A."/>
            <person name="Gocayne J.D."/>
            <person name="Scott J.D."/>
            <person name="Shirley R."/>
            <person name="Liu L.-I."/>
            <person name="Glodek A."/>
            <person name="Kelley J.M."/>
            <person name="Weidman J.F."/>
            <person name="Phillips C.A."/>
            <person name="Spriggs T."/>
            <person name="Hedblom E."/>
            <person name="Cotton M.D."/>
            <person name="Utterback T.R."/>
            <person name="Hanna M.C."/>
            <person name="Nguyen D.T."/>
            <person name="Saudek D.M."/>
            <person name="Brandon R.C."/>
            <person name="Fine L.D."/>
            <person name="Fritchman J.L."/>
            <person name="Fuhrmann J.L."/>
            <person name="Geoghagen N.S.M."/>
            <person name="Gnehm C.L."/>
            <person name="McDonald L.A."/>
            <person name="Small K.V."/>
            <person name="Fraser C.M."/>
            <person name="Smith H.O."/>
            <person name="Venter J.C."/>
        </authorList>
    </citation>
    <scope>NUCLEOTIDE SEQUENCE [LARGE SCALE GENOMIC DNA]</scope>
    <source>
        <strain>ATCC 51907 / DSM 11121 / KW20 / Rd</strain>
    </source>
</reference>
<reference key="2">
    <citation type="journal article" date="2000" name="Electrophoresis">
        <title>Two-dimensional map of the proteome of Haemophilus influenzae.</title>
        <authorList>
            <person name="Langen H."/>
            <person name="Takacs B."/>
            <person name="Evers S."/>
            <person name="Berndt P."/>
            <person name="Lahm H.W."/>
            <person name="Wipf B."/>
            <person name="Gray C."/>
            <person name="Fountoulakis M."/>
        </authorList>
    </citation>
    <scope>PROTEIN SEQUENCE OF 24-32</scope>
    <source>
        <strain>ATCC 51907 / DSM 11121 / KW20 / Rd</strain>
    </source>
</reference>
<name>ZNUA_HAEIN</name>
<evidence type="ECO:0000250" key="1">
    <source>
        <dbReference type="UniProtKB" id="P39172"/>
    </source>
</evidence>
<evidence type="ECO:0000250" key="2">
    <source>
        <dbReference type="UniProtKB" id="P96116"/>
    </source>
</evidence>
<evidence type="ECO:0000250" key="3">
    <source>
        <dbReference type="UniProtKB" id="Q9RPX0"/>
    </source>
</evidence>
<evidence type="ECO:0000256" key="4">
    <source>
        <dbReference type="SAM" id="MobiDB-lite"/>
    </source>
</evidence>
<evidence type="ECO:0000269" key="5">
    <source>
    </source>
</evidence>
<evidence type="ECO:0000305" key="6"/>
<proteinExistence type="evidence at protein level"/>
<accession>P44526</accession>
<keyword id="KW-0903">Direct protein sequencing</keyword>
<keyword id="KW-1015">Disulfide bond</keyword>
<keyword id="KW-0406">Ion transport</keyword>
<keyword id="KW-0479">Metal-binding</keyword>
<keyword id="KW-0574">Periplasm</keyword>
<keyword id="KW-1185">Reference proteome</keyword>
<keyword id="KW-0732">Signal</keyword>
<keyword id="KW-0813">Transport</keyword>
<keyword id="KW-0862">Zinc</keyword>
<keyword id="KW-0864">Zinc transport</keyword>
<protein>
    <recommendedName>
        <fullName>High-affinity zinc uptake system protein ZnuA</fullName>
    </recommendedName>
</protein>
<gene>
    <name type="primary">znuA</name>
    <name type="ordered locus">HI_0119</name>
</gene>
<comment type="function">
    <text evidence="3">Part of the ATP-binding cassette (ABC) transport system ZnuABC involved in zinc import (By similarity). Binds zinc with high affinity and specificity and delivers it to the membrane permease for translocation into the cytoplasm (By similarity).</text>
</comment>
<comment type="subcellular location">
    <subcellularLocation>
        <location evidence="3">Periplasm</location>
    </subcellularLocation>
</comment>
<comment type="similarity">
    <text evidence="6">Belongs to the bacterial solute-binding protein 9 family.</text>
</comment>
<sequence>MKKLLKISAISAALLSAPMMANADVLASVKPLGFIVSSIADGVTGTQVLVPAGASPHDYNLKLSDIQKVKSADLVVWIGEDIDSFLDKPISQIERKKVITIADLADVKPLLSKAHHEHFHEDGDHDHDHKHEHKHDHKHDHDHDHDHKHEHKHDHEHHDHDHHEGLTTNWHVWYSPAISKIVAQKVADKLTAQFPDKKALIAQNLSDFNRTLAEQSEKITAQLANVKDKGFYVFHDAYGYFNDAYGLKQTGYFTINPLVAPGAKTLAHIKEEIDEHKVNCLFAEPQFTPKVIESLAKNTKVNVGQLDPIGDKVTLGKNSYATFLQSTADSYMECLAK</sequence>
<organism>
    <name type="scientific">Haemophilus influenzae (strain ATCC 51907 / DSM 11121 / KW20 / Rd)</name>
    <dbReference type="NCBI Taxonomy" id="71421"/>
    <lineage>
        <taxon>Bacteria</taxon>
        <taxon>Pseudomonadati</taxon>
        <taxon>Pseudomonadota</taxon>
        <taxon>Gammaproteobacteria</taxon>
        <taxon>Pasteurellales</taxon>
        <taxon>Pasteurellaceae</taxon>
        <taxon>Haemophilus</taxon>
    </lineage>
</organism>
<dbReference type="EMBL" id="L42023">
    <property type="protein sequence ID" value="AAC21794.1"/>
    <property type="molecule type" value="Genomic_DNA"/>
</dbReference>
<dbReference type="PIR" id="D64049">
    <property type="entry name" value="D64049"/>
</dbReference>
<dbReference type="RefSeq" id="NP_438291.1">
    <property type="nucleotide sequence ID" value="NC_000907.1"/>
</dbReference>
<dbReference type="SMR" id="P44526"/>
<dbReference type="STRING" id="71421.HI_0119"/>
<dbReference type="EnsemblBacteria" id="AAC21794">
    <property type="protein sequence ID" value="AAC21794"/>
    <property type="gene ID" value="HI_0119"/>
</dbReference>
<dbReference type="KEGG" id="hin:HI_0119"/>
<dbReference type="PATRIC" id="fig|71421.8.peg.123"/>
<dbReference type="eggNOG" id="COG4531">
    <property type="taxonomic scope" value="Bacteria"/>
</dbReference>
<dbReference type="HOGENOM" id="CLU_016838_1_2_6"/>
<dbReference type="OrthoDB" id="7346865at2"/>
<dbReference type="PhylomeDB" id="P44526"/>
<dbReference type="BioCyc" id="HINF71421:G1GJ1-129-MONOMER"/>
<dbReference type="Proteomes" id="UP000000579">
    <property type="component" value="Chromosome"/>
</dbReference>
<dbReference type="GO" id="GO:0042597">
    <property type="term" value="C:periplasmic space"/>
    <property type="evidence" value="ECO:0007669"/>
    <property type="project" value="UniProtKB-SubCell"/>
</dbReference>
<dbReference type="GO" id="GO:0046872">
    <property type="term" value="F:metal ion binding"/>
    <property type="evidence" value="ECO:0007669"/>
    <property type="project" value="UniProtKB-KW"/>
</dbReference>
<dbReference type="GO" id="GO:0006829">
    <property type="term" value="P:zinc ion transport"/>
    <property type="evidence" value="ECO:0007669"/>
    <property type="project" value="UniProtKB-KW"/>
</dbReference>
<dbReference type="CDD" id="cd01019">
    <property type="entry name" value="ZnuA"/>
    <property type="match status" value="1"/>
</dbReference>
<dbReference type="Gene3D" id="3.40.50.1980">
    <property type="entry name" value="Nitrogenase molybdenum iron protein domain"/>
    <property type="match status" value="3"/>
</dbReference>
<dbReference type="InterPro" id="IPR050492">
    <property type="entry name" value="Bact_metal-bind_prot9"/>
</dbReference>
<dbReference type="InterPro" id="IPR035520">
    <property type="entry name" value="ZnuA"/>
</dbReference>
<dbReference type="InterPro" id="IPR006127">
    <property type="entry name" value="ZnuA-like"/>
</dbReference>
<dbReference type="NCBIfam" id="NF007091">
    <property type="entry name" value="PRK09545.1"/>
    <property type="match status" value="1"/>
</dbReference>
<dbReference type="PANTHER" id="PTHR42953:SF3">
    <property type="entry name" value="HIGH-AFFINITY ZINC UPTAKE SYSTEM PROTEIN ZNUA"/>
    <property type="match status" value="1"/>
</dbReference>
<dbReference type="PANTHER" id="PTHR42953">
    <property type="entry name" value="HIGH-AFFINITY ZINC UPTAKE SYSTEM PROTEIN ZNUA-RELATED"/>
    <property type="match status" value="1"/>
</dbReference>
<dbReference type="Pfam" id="PF01297">
    <property type="entry name" value="ZnuA"/>
    <property type="match status" value="1"/>
</dbReference>
<dbReference type="SUPFAM" id="SSF53807">
    <property type="entry name" value="Helical backbone' metal receptor"/>
    <property type="match status" value="1"/>
</dbReference>